<organism>
    <name type="scientific">Myxococcus xanthus</name>
    <dbReference type="NCBI Taxonomy" id="34"/>
    <lineage>
        <taxon>Bacteria</taxon>
        <taxon>Pseudomonadati</taxon>
        <taxon>Myxococcota</taxon>
        <taxon>Myxococcia</taxon>
        <taxon>Myxococcales</taxon>
        <taxon>Cystobacterineae</taxon>
        <taxon>Myxococcaceae</taxon>
        <taxon>Myxococcus</taxon>
    </lineage>
</organism>
<evidence type="ECO:0000255" key="1">
    <source>
        <dbReference type="HAMAP-Rule" id="MF_00093"/>
    </source>
</evidence>
<comment type="function">
    <text evidence="1">Peptide chain release factor 1 directs the termination of translation in response to the peptide chain termination codons UAG and UAA.</text>
</comment>
<comment type="subcellular location">
    <subcellularLocation>
        <location evidence="1">Cytoplasm</location>
    </subcellularLocation>
</comment>
<comment type="PTM">
    <text evidence="1">Methylated by PrmC. Methylation increases the termination efficiency of RF1.</text>
</comment>
<comment type="similarity">
    <text evidence="1">Belongs to the prokaryotic/mitochondrial release factor family.</text>
</comment>
<accession>Q93NC7</accession>
<dbReference type="EMBL" id="AF377339">
    <property type="protein sequence ID" value="AAK64443.1"/>
    <property type="molecule type" value="Genomic_DNA"/>
</dbReference>
<dbReference type="RefSeq" id="WP_011554888.1">
    <property type="nucleotide sequence ID" value="NZ_JABFNQ010000126.1"/>
</dbReference>
<dbReference type="SMR" id="Q93NC7"/>
<dbReference type="GeneID" id="41362195"/>
<dbReference type="OMA" id="DHRVGFK"/>
<dbReference type="GO" id="GO:0005737">
    <property type="term" value="C:cytoplasm"/>
    <property type="evidence" value="ECO:0007669"/>
    <property type="project" value="UniProtKB-SubCell"/>
</dbReference>
<dbReference type="GO" id="GO:0016149">
    <property type="term" value="F:translation release factor activity, codon specific"/>
    <property type="evidence" value="ECO:0007669"/>
    <property type="project" value="UniProtKB-UniRule"/>
</dbReference>
<dbReference type="FunFam" id="3.30.160.20:FF:000004">
    <property type="entry name" value="Peptide chain release factor 1"/>
    <property type="match status" value="1"/>
</dbReference>
<dbReference type="FunFam" id="3.30.70.1660:FF:000002">
    <property type="entry name" value="Peptide chain release factor 1"/>
    <property type="match status" value="1"/>
</dbReference>
<dbReference type="FunFam" id="3.30.70.1660:FF:000004">
    <property type="entry name" value="Peptide chain release factor 1"/>
    <property type="match status" value="1"/>
</dbReference>
<dbReference type="Gene3D" id="3.30.160.20">
    <property type="match status" value="1"/>
</dbReference>
<dbReference type="Gene3D" id="3.30.70.1660">
    <property type="match status" value="1"/>
</dbReference>
<dbReference type="Gene3D" id="6.10.140.1950">
    <property type="match status" value="1"/>
</dbReference>
<dbReference type="HAMAP" id="MF_00093">
    <property type="entry name" value="Rel_fac_1"/>
    <property type="match status" value="1"/>
</dbReference>
<dbReference type="InterPro" id="IPR005139">
    <property type="entry name" value="PCRF"/>
</dbReference>
<dbReference type="InterPro" id="IPR000352">
    <property type="entry name" value="Pep_chain_release_fac_I"/>
</dbReference>
<dbReference type="InterPro" id="IPR045853">
    <property type="entry name" value="Pep_chain_release_fac_I_sf"/>
</dbReference>
<dbReference type="InterPro" id="IPR050057">
    <property type="entry name" value="Prokaryotic/Mito_RF"/>
</dbReference>
<dbReference type="InterPro" id="IPR004373">
    <property type="entry name" value="RF-1"/>
</dbReference>
<dbReference type="NCBIfam" id="TIGR00019">
    <property type="entry name" value="prfA"/>
    <property type="match status" value="1"/>
</dbReference>
<dbReference type="NCBIfam" id="NF001859">
    <property type="entry name" value="PRK00591.1"/>
    <property type="match status" value="1"/>
</dbReference>
<dbReference type="PANTHER" id="PTHR43804">
    <property type="entry name" value="LD18447P"/>
    <property type="match status" value="1"/>
</dbReference>
<dbReference type="PANTHER" id="PTHR43804:SF7">
    <property type="entry name" value="LD18447P"/>
    <property type="match status" value="1"/>
</dbReference>
<dbReference type="Pfam" id="PF03462">
    <property type="entry name" value="PCRF"/>
    <property type="match status" value="1"/>
</dbReference>
<dbReference type="Pfam" id="PF00472">
    <property type="entry name" value="RF-1"/>
    <property type="match status" value="1"/>
</dbReference>
<dbReference type="SMART" id="SM00937">
    <property type="entry name" value="PCRF"/>
    <property type="match status" value="1"/>
</dbReference>
<dbReference type="SUPFAM" id="SSF75620">
    <property type="entry name" value="Release factor"/>
    <property type="match status" value="1"/>
</dbReference>
<dbReference type="PROSITE" id="PS00745">
    <property type="entry name" value="RF_PROK_I"/>
    <property type="match status" value="1"/>
</dbReference>
<proteinExistence type="inferred from homology"/>
<keyword id="KW-0963">Cytoplasm</keyword>
<keyword id="KW-0488">Methylation</keyword>
<keyword id="KW-0648">Protein biosynthesis</keyword>
<gene>
    <name evidence="1" type="primary">prfA</name>
</gene>
<feature type="chain" id="PRO_0000177712" description="Peptide chain release factor 1">
    <location>
        <begin position="1"/>
        <end position="362"/>
    </location>
</feature>
<feature type="modified residue" description="N5-methylglutamine" evidence="1">
    <location>
        <position position="232"/>
    </location>
</feature>
<name>RF1_MYXXA</name>
<reference key="1">
    <citation type="submission" date="2001-05" db="EMBL/GenBank/DDBJ databases">
        <title>Identification of serine/threonine kinase associate proteins in M. xanthus by yeast two-hybrid system.</title>
        <authorList>
            <person name="Nariya H."/>
            <person name="Inouye S."/>
        </authorList>
    </citation>
    <scope>NUCLEOTIDE SEQUENCE [GENOMIC DNA]</scope>
    <source>
        <strain>DZF1</strain>
    </source>
</reference>
<sequence length="362" mass="40142">MIDKLEDVERRFERLTADLSNPDVLADSARLQKVSKERAGLEKLVEAFRTYRKVLADLSEVEAWLGSSDADEKAFARESLPGLKEQRDELEASLKILLLPKDPNDEKNVILEIRAGAGGDEAALFAEEVMQMYLRYADRRGWKADILDMSPGNAGGVKDATVTLSGDAVFSSMKYESGVHRVQRVPATETQGRIHTSTITVSVMPEAEDVDVQVNPADIEMQVMRSTGSGGQSVNTTDSAVRLIHHPTGIVVKCQQEKSQLKNRTMAMRMLRAKLYDIEQERIRNERDSARRAQVGTGDRSEKIRTYNFPQDRLTDHRIGLTVHNLPGVMAGDVEDVITACRTFYQAEALKAQTAGGPKPSA</sequence>
<protein>
    <recommendedName>
        <fullName evidence="1">Peptide chain release factor 1</fullName>
        <shortName evidence="1">RF-1</shortName>
    </recommendedName>
</protein>